<name>MCPAL_TRIVH</name>
<evidence type="ECO:0000250" key="1"/>
<evidence type="ECO:0000255" key="2"/>
<evidence type="ECO:0000255" key="3">
    <source>
        <dbReference type="PROSITE-ProRule" id="PRU01379"/>
    </source>
</evidence>
<evidence type="ECO:0000305" key="4"/>
<accession>D4D675</accession>
<protein>
    <recommendedName>
        <fullName>Metallocarboxypeptidase A-like protein TRV_02598</fullName>
        <ecNumber>3.4.17.-</ecNumber>
    </recommendedName>
</protein>
<keyword id="KW-0121">Carboxypeptidase</keyword>
<keyword id="KW-1015">Disulfide bond</keyword>
<keyword id="KW-0378">Hydrolase</keyword>
<keyword id="KW-0479">Metal-binding</keyword>
<keyword id="KW-0482">Metalloprotease</keyword>
<keyword id="KW-0645">Protease</keyword>
<keyword id="KW-0964">Secreted</keyword>
<keyword id="KW-0732">Signal</keyword>
<keyword id="KW-0843">Virulence</keyword>
<keyword id="KW-0862">Zinc</keyword>
<keyword id="KW-0865">Zymogen</keyword>
<sequence>MQSLLLLATLLGSALGGAIPSQSANYNGYKVMRVSGDDTSKISHIVSKLGLETWKFPKAANANVDIVVPPKKVAEFEKMSHAAGLKKQVMHENLGDSIKSEMSFRPYSCELLTLDGGANDTWFQSYHKYEDHLKFMQDFQSAHSQNSEIVTSGKSHEGRDITGVHVWGSGEKGSKPAVVFHGTVHAREWITTMTVEYILAQLFDDKEAGAALLEKFDFYIFPIANPDGFVFTTESDRMWRKNREQNEGGCYGTDLNRNWPYKWEGDGSTTDPCSETYRGPSPGFAPETKASTSFIKGLADGAGVKMFVDWHSYSQLFMTPYGYSCSARAPNDDVLQEMASSFADAVKAVHGTSFTTGPICNTIYQANGNSVDWIVDEIKGETAFAAELRDTGMYGFVLPPEQIIPSGEETWAGVKAMFSKLK</sequence>
<organism>
    <name type="scientific">Trichophyton verrucosum (strain HKI 0517)</name>
    <dbReference type="NCBI Taxonomy" id="663202"/>
    <lineage>
        <taxon>Eukaryota</taxon>
        <taxon>Fungi</taxon>
        <taxon>Dikarya</taxon>
        <taxon>Ascomycota</taxon>
        <taxon>Pezizomycotina</taxon>
        <taxon>Eurotiomycetes</taxon>
        <taxon>Eurotiomycetidae</taxon>
        <taxon>Onygenales</taxon>
        <taxon>Arthrodermataceae</taxon>
        <taxon>Trichophyton</taxon>
    </lineage>
</organism>
<gene>
    <name type="ORF">TRV_02598</name>
</gene>
<dbReference type="EC" id="3.4.17.-"/>
<dbReference type="EMBL" id="ACYE01000134">
    <property type="protein sequence ID" value="EFE42646.1"/>
    <property type="molecule type" value="Genomic_DNA"/>
</dbReference>
<dbReference type="RefSeq" id="XP_003023264.1">
    <property type="nucleotide sequence ID" value="XM_003023218.1"/>
</dbReference>
<dbReference type="SMR" id="D4D675"/>
<dbReference type="MEROPS" id="M14.014"/>
<dbReference type="GeneID" id="9583272"/>
<dbReference type="KEGG" id="tve:TRV_02598"/>
<dbReference type="HOGENOM" id="CLU_019326_1_1_1"/>
<dbReference type="OrthoDB" id="646at34384"/>
<dbReference type="Proteomes" id="UP000008383">
    <property type="component" value="Unassembled WGS sequence"/>
</dbReference>
<dbReference type="GO" id="GO:0005576">
    <property type="term" value="C:extracellular region"/>
    <property type="evidence" value="ECO:0007669"/>
    <property type="project" value="UniProtKB-SubCell"/>
</dbReference>
<dbReference type="GO" id="GO:0004181">
    <property type="term" value="F:metallocarboxypeptidase activity"/>
    <property type="evidence" value="ECO:0007669"/>
    <property type="project" value="InterPro"/>
</dbReference>
<dbReference type="GO" id="GO:0008270">
    <property type="term" value="F:zinc ion binding"/>
    <property type="evidence" value="ECO:0007669"/>
    <property type="project" value="InterPro"/>
</dbReference>
<dbReference type="GO" id="GO:0006508">
    <property type="term" value="P:proteolysis"/>
    <property type="evidence" value="ECO:0007669"/>
    <property type="project" value="UniProtKB-KW"/>
</dbReference>
<dbReference type="CDD" id="cd03860">
    <property type="entry name" value="M14_CP_A-B_like"/>
    <property type="match status" value="1"/>
</dbReference>
<dbReference type="FunFam" id="3.40.630.10:FF:000165">
    <property type="entry name" value="Glucan 1,4-alpha-glucosidase, putative"/>
    <property type="match status" value="1"/>
</dbReference>
<dbReference type="Gene3D" id="3.30.70.340">
    <property type="entry name" value="Metallocarboxypeptidase-like"/>
    <property type="match status" value="1"/>
</dbReference>
<dbReference type="Gene3D" id="3.40.630.10">
    <property type="entry name" value="Zn peptidases"/>
    <property type="match status" value="1"/>
</dbReference>
<dbReference type="InterPro" id="IPR036990">
    <property type="entry name" value="M14A-like_propep"/>
</dbReference>
<dbReference type="InterPro" id="IPR003146">
    <property type="entry name" value="M14A_act_pep"/>
</dbReference>
<dbReference type="InterPro" id="IPR000834">
    <property type="entry name" value="Peptidase_M14"/>
</dbReference>
<dbReference type="PANTHER" id="PTHR11705">
    <property type="entry name" value="PROTEASE FAMILY M14 CARBOXYPEPTIDASE A,B"/>
    <property type="match status" value="1"/>
</dbReference>
<dbReference type="PANTHER" id="PTHR11705:SF143">
    <property type="entry name" value="SLL0236 PROTEIN"/>
    <property type="match status" value="1"/>
</dbReference>
<dbReference type="Pfam" id="PF00246">
    <property type="entry name" value="Peptidase_M14"/>
    <property type="match status" value="1"/>
</dbReference>
<dbReference type="Pfam" id="PF02244">
    <property type="entry name" value="Propep_M14"/>
    <property type="match status" value="1"/>
</dbReference>
<dbReference type="PRINTS" id="PR00765">
    <property type="entry name" value="CRBOXYPTASEA"/>
</dbReference>
<dbReference type="SMART" id="SM00631">
    <property type="entry name" value="Zn_pept"/>
    <property type="match status" value="1"/>
</dbReference>
<dbReference type="SUPFAM" id="SSF54897">
    <property type="entry name" value="Protease propeptides/inhibitors"/>
    <property type="match status" value="1"/>
</dbReference>
<dbReference type="SUPFAM" id="SSF53187">
    <property type="entry name" value="Zn-dependent exopeptidases"/>
    <property type="match status" value="1"/>
</dbReference>
<dbReference type="PROSITE" id="PS00132">
    <property type="entry name" value="CARBOXYPEPT_ZN_1"/>
    <property type="match status" value="1"/>
</dbReference>
<dbReference type="PROSITE" id="PS52035">
    <property type="entry name" value="PEPTIDASE_M14"/>
    <property type="match status" value="1"/>
</dbReference>
<comment type="function">
    <text evidence="1">Extracellular metalloprotease that contributes to pathogenicity.</text>
</comment>
<comment type="cofactor">
    <cofactor evidence="1">
        <name>Zn(2+)</name>
        <dbReference type="ChEBI" id="CHEBI:29105"/>
    </cofactor>
    <text evidence="1">Binds 1 zinc ion per subunit.</text>
</comment>
<comment type="subcellular location">
    <subcellularLocation>
        <location evidence="1">Secreted</location>
    </subcellularLocation>
</comment>
<comment type="similarity">
    <text evidence="4">Belongs to the peptidase M14 family.</text>
</comment>
<feature type="signal peptide" evidence="2">
    <location>
        <begin position="1"/>
        <end position="16"/>
    </location>
</feature>
<feature type="propeptide" id="PRO_0000397756" description="Activation peptide" evidence="1">
    <location>
        <begin position="17"/>
        <end position="119"/>
    </location>
</feature>
<feature type="chain" id="PRO_0000397757" description="Metallocarboxypeptidase A-like protein TRV_02598">
    <location>
        <begin position="120"/>
        <end position="422"/>
    </location>
</feature>
<feature type="domain" description="Peptidase M14" evidence="3">
    <location>
        <begin position="125"/>
        <end position="421"/>
    </location>
</feature>
<feature type="active site" description="Proton donor/acceptor" evidence="3">
    <location>
        <position position="387"/>
    </location>
</feature>
<feature type="binding site" evidence="1">
    <location>
        <begin position="185"/>
        <end position="188"/>
    </location>
    <ligand>
        <name>substrate</name>
    </ligand>
</feature>
<feature type="binding site" evidence="3">
    <location>
        <position position="185"/>
    </location>
    <ligand>
        <name>Zn(2+)</name>
        <dbReference type="ChEBI" id="CHEBI:29105"/>
        <note>catalytic</note>
    </ligand>
</feature>
<feature type="binding site" evidence="3">
    <location>
        <position position="188"/>
    </location>
    <ligand>
        <name>Zn(2+)</name>
        <dbReference type="ChEBI" id="CHEBI:29105"/>
        <note>catalytic</note>
    </ligand>
</feature>
<feature type="binding site" evidence="1">
    <location>
        <position position="240"/>
    </location>
    <ligand>
        <name>substrate</name>
    </ligand>
</feature>
<feature type="binding site" evidence="1">
    <location>
        <begin position="256"/>
        <end position="257"/>
    </location>
    <ligand>
        <name>substrate</name>
    </ligand>
</feature>
<feature type="binding site" evidence="3">
    <location>
        <position position="311"/>
    </location>
    <ligand>
        <name>Zn(2+)</name>
        <dbReference type="ChEBI" id="CHEBI:29105"/>
        <note>catalytic</note>
    </ligand>
</feature>
<feature type="binding site" evidence="1">
    <location>
        <begin position="312"/>
        <end position="313"/>
    </location>
    <ligand>
        <name>substrate</name>
    </ligand>
</feature>
<feature type="disulfide bond" evidence="1">
    <location>
        <begin position="250"/>
        <end position="273"/>
    </location>
</feature>
<reference key="1">
    <citation type="journal article" date="2011" name="Genome Biol.">
        <title>Comparative and functional genomics provide insights into the pathogenicity of dermatophytic fungi.</title>
        <authorList>
            <person name="Burmester A."/>
            <person name="Shelest E."/>
            <person name="Gloeckner G."/>
            <person name="Heddergott C."/>
            <person name="Schindler S."/>
            <person name="Staib P."/>
            <person name="Heidel A."/>
            <person name="Felder M."/>
            <person name="Petzold A."/>
            <person name="Szafranski K."/>
            <person name="Feuermann M."/>
            <person name="Pedruzzi I."/>
            <person name="Priebe S."/>
            <person name="Groth M."/>
            <person name="Winkler R."/>
            <person name="Li W."/>
            <person name="Kniemeyer O."/>
            <person name="Schroeckh V."/>
            <person name="Hertweck C."/>
            <person name="Hube B."/>
            <person name="White T.C."/>
            <person name="Platzer M."/>
            <person name="Guthke R."/>
            <person name="Heitman J."/>
            <person name="Woestemeyer J."/>
            <person name="Zipfel P.F."/>
            <person name="Monod M."/>
            <person name="Brakhage A.A."/>
        </authorList>
    </citation>
    <scope>NUCLEOTIDE SEQUENCE [LARGE SCALE GENOMIC DNA]</scope>
    <source>
        <strain>HKI 0517</strain>
    </source>
</reference>
<proteinExistence type="inferred from homology"/>